<evidence type="ECO:0000250" key="1"/>
<evidence type="ECO:0000255" key="2">
    <source>
        <dbReference type="HAMAP-Rule" id="MF_00403"/>
    </source>
</evidence>
<evidence type="ECO:0000256" key="3">
    <source>
        <dbReference type="SAM" id="MobiDB-lite"/>
    </source>
</evidence>
<evidence type="ECO:0000305" key="4"/>
<comment type="function">
    <text evidence="2">With S4 and S5 plays an important role in translational accuracy.</text>
</comment>
<comment type="function">
    <text evidence="2">Interacts with and stabilizes bases of the 16S rRNA that are involved in tRNA selection in the A site and with the mRNA backbone. Located at the interface of the 30S and 50S subunits, it traverses the body of the 30S subunit contacting proteins on the other side and probably holding the rRNA structure together. The combined cluster of proteins S8, S12 and S17 appears to hold together the shoulder and platform of the 30S subunit.</text>
</comment>
<comment type="subunit">
    <text evidence="2">Part of the 30S ribosomal subunit. Contacts proteins S8 and S17. May interact with IF1 in the 30S initiation complex.</text>
</comment>
<comment type="similarity">
    <text evidence="2">Belongs to the universal ribosomal protein uS12 family.</text>
</comment>
<dbReference type="EMBL" id="AE016823">
    <property type="protein sequence ID" value="AAS69372.1"/>
    <property type="molecule type" value="Genomic_DNA"/>
</dbReference>
<dbReference type="RefSeq" id="WP_001142358.1">
    <property type="nucleotide sequence ID" value="NC_005823.1"/>
</dbReference>
<dbReference type="SMR" id="Q72UA6"/>
<dbReference type="GeneID" id="61172897"/>
<dbReference type="KEGG" id="lic:LIC_10755"/>
<dbReference type="HOGENOM" id="CLU_104295_1_2_12"/>
<dbReference type="Proteomes" id="UP000007037">
    <property type="component" value="Chromosome I"/>
</dbReference>
<dbReference type="GO" id="GO:0015935">
    <property type="term" value="C:small ribosomal subunit"/>
    <property type="evidence" value="ECO:0007669"/>
    <property type="project" value="InterPro"/>
</dbReference>
<dbReference type="GO" id="GO:0019843">
    <property type="term" value="F:rRNA binding"/>
    <property type="evidence" value="ECO:0007669"/>
    <property type="project" value="UniProtKB-UniRule"/>
</dbReference>
<dbReference type="GO" id="GO:0003735">
    <property type="term" value="F:structural constituent of ribosome"/>
    <property type="evidence" value="ECO:0007669"/>
    <property type="project" value="InterPro"/>
</dbReference>
<dbReference type="GO" id="GO:0000049">
    <property type="term" value="F:tRNA binding"/>
    <property type="evidence" value="ECO:0007669"/>
    <property type="project" value="UniProtKB-UniRule"/>
</dbReference>
<dbReference type="GO" id="GO:0006412">
    <property type="term" value="P:translation"/>
    <property type="evidence" value="ECO:0007669"/>
    <property type="project" value="UniProtKB-UniRule"/>
</dbReference>
<dbReference type="CDD" id="cd03368">
    <property type="entry name" value="Ribosomal_S12"/>
    <property type="match status" value="1"/>
</dbReference>
<dbReference type="FunFam" id="2.40.50.140:FF:000001">
    <property type="entry name" value="30S ribosomal protein S12"/>
    <property type="match status" value="1"/>
</dbReference>
<dbReference type="Gene3D" id="2.40.50.140">
    <property type="entry name" value="Nucleic acid-binding proteins"/>
    <property type="match status" value="1"/>
</dbReference>
<dbReference type="HAMAP" id="MF_00403_B">
    <property type="entry name" value="Ribosomal_uS12_B"/>
    <property type="match status" value="1"/>
</dbReference>
<dbReference type="InterPro" id="IPR012340">
    <property type="entry name" value="NA-bd_OB-fold"/>
</dbReference>
<dbReference type="InterPro" id="IPR006032">
    <property type="entry name" value="Ribosomal_uS12"/>
</dbReference>
<dbReference type="InterPro" id="IPR005679">
    <property type="entry name" value="Ribosomal_uS12_bac"/>
</dbReference>
<dbReference type="NCBIfam" id="TIGR00981">
    <property type="entry name" value="rpsL_bact"/>
    <property type="match status" value="1"/>
</dbReference>
<dbReference type="PANTHER" id="PTHR11652">
    <property type="entry name" value="30S RIBOSOMAL PROTEIN S12 FAMILY MEMBER"/>
    <property type="match status" value="1"/>
</dbReference>
<dbReference type="Pfam" id="PF00164">
    <property type="entry name" value="Ribosom_S12_S23"/>
    <property type="match status" value="1"/>
</dbReference>
<dbReference type="PIRSF" id="PIRSF002133">
    <property type="entry name" value="Ribosomal_S12/S23"/>
    <property type="match status" value="1"/>
</dbReference>
<dbReference type="PRINTS" id="PR01034">
    <property type="entry name" value="RIBOSOMALS12"/>
</dbReference>
<dbReference type="SUPFAM" id="SSF50249">
    <property type="entry name" value="Nucleic acid-binding proteins"/>
    <property type="match status" value="1"/>
</dbReference>
<dbReference type="PROSITE" id="PS00055">
    <property type="entry name" value="RIBOSOMAL_S12"/>
    <property type="match status" value="1"/>
</dbReference>
<organism>
    <name type="scientific">Leptospira interrogans serogroup Icterohaemorrhagiae serovar copenhageni (strain Fiocruz L1-130)</name>
    <dbReference type="NCBI Taxonomy" id="267671"/>
    <lineage>
        <taxon>Bacteria</taxon>
        <taxon>Pseudomonadati</taxon>
        <taxon>Spirochaetota</taxon>
        <taxon>Spirochaetia</taxon>
        <taxon>Leptospirales</taxon>
        <taxon>Leptospiraceae</taxon>
        <taxon>Leptospira</taxon>
    </lineage>
</organism>
<gene>
    <name evidence="2" type="primary">rpsL</name>
    <name type="ordered locus">LIC_10755</name>
</gene>
<name>RS12_LEPIC</name>
<protein>
    <recommendedName>
        <fullName evidence="2">Small ribosomal subunit protein uS12</fullName>
    </recommendedName>
    <alternativeName>
        <fullName evidence="4">30S ribosomal protein S12</fullName>
    </alternativeName>
</protein>
<sequence length="124" mass="13943">MPTISQLIRHGRQKQKKRTKSPALKSSPQRRGVCTRVMTFTPKKPNSALRKVARVRLTTGIEVTAYIPGEGHNLQEHNVVLIRGGRVKDLPGVRYHIIRGTLDTLGVDKRRNGRSKYGAKRPKA</sequence>
<reference key="1">
    <citation type="journal article" date="2004" name="J. Bacteriol.">
        <title>Comparative genomics of two Leptospira interrogans serovars reveals novel insights into physiology and pathogenesis.</title>
        <authorList>
            <person name="Nascimento A.L.T.O."/>
            <person name="Ko A.I."/>
            <person name="Martins E.A.L."/>
            <person name="Monteiro-Vitorello C.B."/>
            <person name="Ho P.L."/>
            <person name="Haake D.A."/>
            <person name="Verjovski-Almeida S."/>
            <person name="Hartskeerl R.A."/>
            <person name="Marques M.V."/>
            <person name="Oliveira M.C."/>
            <person name="Menck C.F.M."/>
            <person name="Leite L.C.C."/>
            <person name="Carrer H."/>
            <person name="Coutinho L.L."/>
            <person name="Degrave W.M."/>
            <person name="Dellagostin O.A."/>
            <person name="El-Dorry H."/>
            <person name="Ferro E.S."/>
            <person name="Ferro M.I.T."/>
            <person name="Furlan L.R."/>
            <person name="Gamberini M."/>
            <person name="Giglioti E.A."/>
            <person name="Goes-Neto A."/>
            <person name="Goldman G.H."/>
            <person name="Goldman M.H.S."/>
            <person name="Harakava R."/>
            <person name="Jeronimo S.M.B."/>
            <person name="Junqueira-de-Azevedo I.L.M."/>
            <person name="Kimura E.T."/>
            <person name="Kuramae E.E."/>
            <person name="Lemos E.G.M."/>
            <person name="Lemos M.V.F."/>
            <person name="Marino C.L."/>
            <person name="Nunes L.R."/>
            <person name="de Oliveira R.C."/>
            <person name="Pereira G.G."/>
            <person name="Reis M.S."/>
            <person name="Schriefer A."/>
            <person name="Siqueira W.J."/>
            <person name="Sommer P."/>
            <person name="Tsai S.M."/>
            <person name="Simpson A.J.G."/>
            <person name="Ferro J.A."/>
            <person name="Camargo L.E.A."/>
            <person name="Kitajima J.P."/>
            <person name="Setubal J.C."/>
            <person name="Van Sluys M.A."/>
        </authorList>
    </citation>
    <scope>NUCLEOTIDE SEQUENCE [LARGE SCALE GENOMIC DNA]</scope>
    <source>
        <strain>Fiocruz L1-130</strain>
    </source>
</reference>
<keyword id="KW-0488">Methylation</keyword>
<keyword id="KW-0687">Ribonucleoprotein</keyword>
<keyword id="KW-0689">Ribosomal protein</keyword>
<keyword id="KW-0694">RNA-binding</keyword>
<keyword id="KW-0699">rRNA-binding</keyword>
<keyword id="KW-0820">tRNA-binding</keyword>
<feature type="chain" id="PRO_0000146246" description="Small ribosomal subunit protein uS12">
    <location>
        <begin position="1"/>
        <end position="124"/>
    </location>
</feature>
<feature type="region of interest" description="Disordered" evidence="3">
    <location>
        <begin position="1"/>
        <end position="32"/>
    </location>
</feature>
<feature type="compositionally biased region" description="Basic residues" evidence="3">
    <location>
        <begin position="9"/>
        <end position="20"/>
    </location>
</feature>
<feature type="modified residue" description="3-methylthioaspartic acid" evidence="1">
    <location>
        <position position="89"/>
    </location>
</feature>
<accession>Q72UA6</accession>
<proteinExistence type="inferred from homology"/>